<reference key="1">
    <citation type="journal article" date="2003" name="Genome Res.">
        <title>Genome sequence of an M3 strain of Streptococcus pyogenes reveals a large-scale genomic rearrangement in invasive strains and new insights into phage evolution.</title>
        <authorList>
            <person name="Nakagawa I."/>
            <person name="Kurokawa K."/>
            <person name="Yamashita A."/>
            <person name="Nakata M."/>
            <person name="Tomiyasu Y."/>
            <person name="Okahashi N."/>
            <person name="Kawabata S."/>
            <person name="Yamazaki K."/>
            <person name="Shiba T."/>
            <person name="Yasunaga T."/>
            <person name="Hayashi H."/>
            <person name="Hattori M."/>
            <person name="Hamada S."/>
        </authorList>
    </citation>
    <scope>NUCLEOTIDE SEQUENCE [LARGE SCALE GENOMIC DNA]</scope>
    <source>
        <strain>SSI-1</strain>
    </source>
</reference>
<name>RL4_STRPQ</name>
<proteinExistence type="inferred from homology"/>
<keyword id="KW-0687">Ribonucleoprotein</keyword>
<keyword id="KW-0689">Ribosomal protein</keyword>
<keyword id="KW-0694">RNA-binding</keyword>
<keyword id="KW-0699">rRNA-binding</keyword>
<organism>
    <name type="scientific">Streptococcus pyogenes serotype M3 (strain SSI-1)</name>
    <dbReference type="NCBI Taxonomy" id="193567"/>
    <lineage>
        <taxon>Bacteria</taxon>
        <taxon>Bacillati</taxon>
        <taxon>Bacillota</taxon>
        <taxon>Bacilli</taxon>
        <taxon>Lactobacillales</taxon>
        <taxon>Streptococcaceae</taxon>
        <taxon>Streptococcus</taxon>
    </lineage>
</organism>
<evidence type="ECO:0000255" key="1">
    <source>
        <dbReference type="HAMAP-Rule" id="MF_01328"/>
    </source>
</evidence>
<evidence type="ECO:0000256" key="2">
    <source>
        <dbReference type="SAM" id="MobiDB-lite"/>
    </source>
</evidence>
<evidence type="ECO:0000305" key="3"/>
<gene>
    <name evidence="1" type="primary">rplD</name>
    <name type="ordered locus">SPs0043</name>
</gene>
<accession>P0DE55</accession>
<accession>Q879R1</accession>
<accession>Q8K8X3</accession>
<sequence length="207" mass="22125">MANVKLFDQTGKEVSSVELNDAIFGIEPNESVVFDVVISQRASLRQGTHAVKNRSAVSGGGRKPWRQKGTGRARQGSIRSPQWRGGGVVFGPTPRSYGYKLPQKVRRLALKSVYSAKVAEDKFVAVEGLSFAAPKTAEFAKVLSALSIDTKVLVLVEEGNEFAALSARNLPNVTVATAATASVLDIVNADKLLVTKEAISTIEEVLA</sequence>
<dbReference type="EMBL" id="BA000034">
    <property type="protein sequence ID" value="BAC63138.1"/>
    <property type="molecule type" value="Genomic_DNA"/>
</dbReference>
<dbReference type="RefSeq" id="WP_002986657.1">
    <property type="nucleotide sequence ID" value="NC_004606.1"/>
</dbReference>
<dbReference type="SMR" id="P0DE55"/>
<dbReference type="GeneID" id="83689572"/>
<dbReference type="KEGG" id="sps:SPs0043"/>
<dbReference type="HOGENOM" id="CLU_041575_5_2_9"/>
<dbReference type="GO" id="GO:1990904">
    <property type="term" value="C:ribonucleoprotein complex"/>
    <property type="evidence" value="ECO:0007669"/>
    <property type="project" value="UniProtKB-KW"/>
</dbReference>
<dbReference type="GO" id="GO:0005840">
    <property type="term" value="C:ribosome"/>
    <property type="evidence" value="ECO:0007669"/>
    <property type="project" value="UniProtKB-KW"/>
</dbReference>
<dbReference type="GO" id="GO:0019843">
    <property type="term" value="F:rRNA binding"/>
    <property type="evidence" value="ECO:0007669"/>
    <property type="project" value="UniProtKB-UniRule"/>
</dbReference>
<dbReference type="GO" id="GO:0003735">
    <property type="term" value="F:structural constituent of ribosome"/>
    <property type="evidence" value="ECO:0007669"/>
    <property type="project" value="InterPro"/>
</dbReference>
<dbReference type="GO" id="GO:0006412">
    <property type="term" value="P:translation"/>
    <property type="evidence" value="ECO:0007669"/>
    <property type="project" value="UniProtKB-UniRule"/>
</dbReference>
<dbReference type="FunFam" id="3.40.1370.10:FF:000003">
    <property type="entry name" value="50S ribosomal protein L4"/>
    <property type="match status" value="1"/>
</dbReference>
<dbReference type="Gene3D" id="3.40.1370.10">
    <property type="match status" value="1"/>
</dbReference>
<dbReference type="HAMAP" id="MF_01328_B">
    <property type="entry name" value="Ribosomal_uL4_B"/>
    <property type="match status" value="1"/>
</dbReference>
<dbReference type="InterPro" id="IPR002136">
    <property type="entry name" value="Ribosomal_uL4"/>
</dbReference>
<dbReference type="InterPro" id="IPR013005">
    <property type="entry name" value="Ribosomal_uL4-like"/>
</dbReference>
<dbReference type="InterPro" id="IPR023574">
    <property type="entry name" value="Ribosomal_uL4_dom_sf"/>
</dbReference>
<dbReference type="NCBIfam" id="TIGR03953">
    <property type="entry name" value="rplD_bact"/>
    <property type="match status" value="1"/>
</dbReference>
<dbReference type="PANTHER" id="PTHR10746">
    <property type="entry name" value="50S RIBOSOMAL PROTEIN L4"/>
    <property type="match status" value="1"/>
</dbReference>
<dbReference type="PANTHER" id="PTHR10746:SF6">
    <property type="entry name" value="LARGE RIBOSOMAL SUBUNIT PROTEIN UL4M"/>
    <property type="match status" value="1"/>
</dbReference>
<dbReference type="Pfam" id="PF00573">
    <property type="entry name" value="Ribosomal_L4"/>
    <property type="match status" value="1"/>
</dbReference>
<dbReference type="SUPFAM" id="SSF52166">
    <property type="entry name" value="Ribosomal protein L4"/>
    <property type="match status" value="1"/>
</dbReference>
<comment type="function">
    <text evidence="1">One of the primary rRNA binding proteins, this protein initially binds near the 5'-end of the 23S rRNA. It is important during the early stages of 50S assembly. It makes multiple contacts with different domains of the 23S rRNA in the assembled 50S subunit and ribosome.</text>
</comment>
<comment type="function">
    <text evidence="1">Forms part of the polypeptide exit tunnel.</text>
</comment>
<comment type="subunit">
    <text evidence="1">Part of the 50S ribosomal subunit.</text>
</comment>
<comment type="similarity">
    <text evidence="1">Belongs to the universal ribosomal protein uL4 family.</text>
</comment>
<feature type="chain" id="PRO_0000411517" description="Large ribosomal subunit protein uL4">
    <location>
        <begin position="1"/>
        <end position="207"/>
    </location>
</feature>
<feature type="region of interest" description="Disordered" evidence="2">
    <location>
        <begin position="49"/>
        <end position="78"/>
    </location>
</feature>
<protein>
    <recommendedName>
        <fullName evidence="1">Large ribosomal subunit protein uL4</fullName>
    </recommendedName>
    <alternativeName>
        <fullName evidence="3">50S ribosomal protein L4</fullName>
    </alternativeName>
</protein>